<protein>
    <recommendedName>
        <fullName evidence="1">Proline--tRNA ligase</fullName>
        <ecNumber evidence="1">6.1.1.15</ecNumber>
    </recommendedName>
    <alternativeName>
        <fullName evidence="1">Prolyl-tRNA synthetase</fullName>
        <shortName evidence="1">ProRS</shortName>
    </alternativeName>
</protein>
<evidence type="ECO:0000255" key="1">
    <source>
        <dbReference type="HAMAP-Rule" id="MF_01569"/>
    </source>
</evidence>
<evidence type="ECO:0000269" key="2">
    <source>
    </source>
</evidence>
<accession>P9WFT9</accession>
<accession>L0TB17</accession>
<accession>O05814</accession>
<feature type="chain" id="PRO_0000139336" description="Proline--tRNA ligase">
    <location>
        <begin position="1"/>
        <end position="582"/>
    </location>
</feature>
<feature type="cross-link" description="Isoglutamyl lysine isopeptide (Lys-Gln) (interchain with Q-Cter in protein Pup)" evidence="2">
    <location>
        <position position="173"/>
    </location>
</feature>
<proteinExistence type="evidence at protein level"/>
<sequence length="582" mass="63302">MITRMSELFLRTLRDDPADAEVASHKLLIRAGYIRPVAPGLYSWLPLGLRVLRNIERVIRDEMNAIGGQEILFPALLPRAPYETTNRWTQYGDSVFRLKDRRGNDYLLGPTHEELFTLTVKGEYSSYKDFPLTLYQIQTKYRDEARPRAGILRAREFVMKDSYSFDIDAAGLKAAYHAHREAYQRIFDRLQVRYVIVSAVSGAMGGSASEEFLAESPSGEDAFVRCLESGYAANVEAVVTARPDTLPIDGLPEAVVHDTGDTPTIASLVAWANEADLGRTVTAADTLKNVLIKVRQPGGDTELLAIGVPGDREVDDKRLGAALEPADYALLDDDDFAKHPFLVKGYIGPKALRENNVRYLVDPRIVDGTSWITGADQPGRHVVGLVAGRDFTADGTIEAAEVREGDPSPDGAGPLVMARGIEIGHIFQLGSKYTDAFTADVLGEDGKPVRLTMGSYGIGVSRLVAVVAEQHHDELGLRWPSTVAPFDVHLVIANKDAQARAGATALAADLDRLGVEVLLDDRQASPGVKFKDAELLGMPWIVVVGRGWADGVVELRDRFSGQTRELVAGASLATDIAAAVTG</sequence>
<name>SYP_MYCTU</name>
<gene>
    <name evidence="1" type="primary">proS</name>
    <name type="ordered locus">Rv2845c</name>
    <name type="ORF">MTCY24A1.12</name>
</gene>
<comment type="function">
    <text evidence="1">Catalyzes the attachment of proline to tRNA(Pro) in a two-step reaction: proline is first activated by ATP to form Pro-AMP and then transferred to the acceptor end of tRNA(Pro). As ProRS can inadvertently accommodate and process non-cognate amino acids such as alanine and cysteine, to avoid such errors it has two additional distinct editing activities against alanine. One activity is designated as 'pretransfer' editing and involves the tRNA(Pro)-independent hydrolysis of activated Ala-AMP. The other activity is designated 'posttransfer' editing and involves deacylation of mischarged Ala-tRNA(Pro). The misacylated Cys-tRNA(Pro) is not edited by ProRS.</text>
</comment>
<comment type="catalytic activity">
    <reaction evidence="1">
        <text>tRNA(Pro) + L-proline + ATP = L-prolyl-tRNA(Pro) + AMP + diphosphate</text>
        <dbReference type="Rhea" id="RHEA:14305"/>
        <dbReference type="Rhea" id="RHEA-COMP:9700"/>
        <dbReference type="Rhea" id="RHEA-COMP:9702"/>
        <dbReference type="ChEBI" id="CHEBI:30616"/>
        <dbReference type="ChEBI" id="CHEBI:33019"/>
        <dbReference type="ChEBI" id="CHEBI:60039"/>
        <dbReference type="ChEBI" id="CHEBI:78442"/>
        <dbReference type="ChEBI" id="CHEBI:78532"/>
        <dbReference type="ChEBI" id="CHEBI:456215"/>
        <dbReference type="EC" id="6.1.1.15"/>
    </reaction>
</comment>
<comment type="subunit">
    <text evidence="1">Homodimer.</text>
</comment>
<comment type="subcellular location">
    <subcellularLocation>
        <location evidence="1">Cytoplasm</location>
    </subcellularLocation>
</comment>
<comment type="domain">
    <text evidence="1">Consists of three domains: the N-terminal catalytic domain, the editing domain and the C-terminal anticodon-binding domain.</text>
</comment>
<comment type="similarity">
    <text evidence="1">Belongs to the class-II aminoacyl-tRNA synthetase family. ProS type 1 subfamily.</text>
</comment>
<reference key="1">
    <citation type="journal article" date="1998" name="Nature">
        <title>Deciphering the biology of Mycobacterium tuberculosis from the complete genome sequence.</title>
        <authorList>
            <person name="Cole S.T."/>
            <person name="Brosch R."/>
            <person name="Parkhill J."/>
            <person name="Garnier T."/>
            <person name="Churcher C.M."/>
            <person name="Harris D.E."/>
            <person name="Gordon S.V."/>
            <person name="Eiglmeier K."/>
            <person name="Gas S."/>
            <person name="Barry C.E. III"/>
            <person name="Tekaia F."/>
            <person name="Badcock K."/>
            <person name="Basham D."/>
            <person name="Brown D."/>
            <person name="Chillingworth T."/>
            <person name="Connor R."/>
            <person name="Davies R.M."/>
            <person name="Devlin K."/>
            <person name="Feltwell T."/>
            <person name="Gentles S."/>
            <person name="Hamlin N."/>
            <person name="Holroyd S."/>
            <person name="Hornsby T."/>
            <person name="Jagels K."/>
            <person name="Krogh A."/>
            <person name="McLean J."/>
            <person name="Moule S."/>
            <person name="Murphy L.D."/>
            <person name="Oliver S."/>
            <person name="Osborne J."/>
            <person name="Quail M.A."/>
            <person name="Rajandream M.A."/>
            <person name="Rogers J."/>
            <person name="Rutter S."/>
            <person name="Seeger K."/>
            <person name="Skelton S."/>
            <person name="Squares S."/>
            <person name="Squares R."/>
            <person name="Sulston J.E."/>
            <person name="Taylor K."/>
            <person name="Whitehead S."/>
            <person name="Barrell B.G."/>
        </authorList>
    </citation>
    <scope>NUCLEOTIDE SEQUENCE [LARGE SCALE GENOMIC DNA]</scope>
    <source>
        <strain>ATCC 25618 / H37Rv</strain>
    </source>
</reference>
<reference key="2">
    <citation type="journal article" date="2010" name="PLoS ONE">
        <title>Prokaryotic ubiquitin-like protein (Pup) proteome of Mycobacterium tuberculosis.</title>
        <authorList>
            <person name="Festa R.A."/>
            <person name="McAllister F."/>
            <person name="Pearce M.J."/>
            <person name="Mintseris J."/>
            <person name="Burns K.E."/>
            <person name="Gygi S.P."/>
            <person name="Darwin K.H."/>
        </authorList>
    </citation>
    <scope>PUPYLATION AT LYS-173</scope>
    <scope>IDENTIFICATION BY MASS SPECTROMETRY</scope>
    <source>
        <strain>ATCC 25618 / H37Rv</strain>
    </source>
</reference>
<reference key="3">
    <citation type="journal article" date="2011" name="Mol. Cell. Proteomics">
        <title>Proteogenomic analysis of Mycobacterium tuberculosis by high resolution mass spectrometry.</title>
        <authorList>
            <person name="Kelkar D.S."/>
            <person name="Kumar D."/>
            <person name="Kumar P."/>
            <person name="Balakrishnan L."/>
            <person name="Muthusamy B."/>
            <person name="Yadav A.K."/>
            <person name="Shrivastava P."/>
            <person name="Marimuthu A."/>
            <person name="Anand S."/>
            <person name="Sundaram H."/>
            <person name="Kingsbury R."/>
            <person name="Harsha H.C."/>
            <person name="Nair B."/>
            <person name="Prasad T.S."/>
            <person name="Chauhan D.S."/>
            <person name="Katoch K."/>
            <person name="Katoch V.M."/>
            <person name="Kumar P."/>
            <person name="Chaerkady R."/>
            <person name="Ramachandran S."/>
            <person name="Dash D."/>
            <person name="Pandey A."/>
        </authorList>
    </citation>
    <scope>IDENTIFICATION BY MASS SPECTROMETRY [LARGE SCALE ANALYSIS]</scope>
    <source>
        <strain>ATCC 25618 / H37Rv</strain>
    </source>
</reference>
<dbReference type="EC" id="6.1.1.15" evidence="1"/>
<dbReference type="EMBL" id="AL123456">
    <property type="protein sequence ID" value="CCP45646.1"/>
    <property type="molecule type" value="Genomic_DNA"/>
</dbReference>
<dbReference type="PIR" id="H70588">
    <property type="entry name" value="H70588"/>
</dbReference>
<dbReference type="RefSeq" id="NP_217361.1">
    <property type="nucleotide sequence ID" value="NC_000962.3"/>
</dbReference>
<dbReference type="RefSeq" id="WP_003899508.1">
    <property type="nucleotide sequence ID" value="NZ_NVQJ01000006.1"/>
</dbReference>
<dbReference type="SMR" id="P9WFT9"/>
<dbReference type="FunCoup" id="P9WFT9">
    <property type="interactions" value="280"/>
</dbReference>
<dbReference type="STRING" id="83332.Rv2845c"/>
<dbReference type="PaxDb" id="83332-Rv2845c"/>
<dbReference type="DNASU" id="888539"/>
<dbReference type="GeneID" id="888539"/>
<dbReference type="KEGG" id="mtu:Rv2845c"/>
<dbReference type="KEGG" id="mtv:RVBD_2845c"/>
<dbReference type="TubercuList" id="Rv2845c"/>
<dbReference type="eggNOG" id="COG0442">
    <property type="taxonomic scope" value="Bacteria"/>
</dbReference>
<dbReference type="InParanoid" id="P9WFT9"/>
<dbReference type="OrthoDB" id="9809052at2"/>
<dbReference type="PhylomeDB" id="P9WFT9"/>
<dbReference type="Proteomes" id="UP000001584">
    <property type="component" value="Chromosome"/>
</dbReference>
<dbReference type="GO" id="GO:0005829">
    <property type="term" value="C:cytosol"/>
    <property type="evidence" value="ECO:0000318"/>
    <property type="project" value="GO_Central"/>
</dbReference>
<dbReference type="GO" id="GO:0009274">
    <property type="term" value="C:peptidoglycan-based cell wall"/>
    <property type="evidence" value="ECO:0007005"/>
    <property type="project" value="MTBBASE"/>
</dbReference>
<dbReference type="GO" id="GO:0005886">
    <property type="term" value="C:plasma membrane"/>
    <property type="evidence" value="ECO:0007005"/>
    <property type="project" value="MTBBASE"/>
</dbReference>
<dbReference type="GO" id="GO:0002161">
    <property type="term" value="F:aminoacyl-tRNA deacylase activity"/>
    <property type="evidence" value="ECO:0007669"/>
    <property type="project" value="InterPro"/>
</dbReference>
<dbReference type="GO" id="GO:0005524">
    <property type="term" value="F:ATP binding"/>
    <property type="evidence" value="ECO:0007669"/>
    <property type="project" value="UniProtKB-UniRule"/>
</dbReference>
<dbReference type="GO" id="GO:0004827">
    <property type="term" value="F:proline-tRNA ligase activity"/>
    <property type="evidence" value="ECO:0000318"/>
    <property type="project" value="GO_Central"/>
</dbReference>
<dbReference type="GO" id="GO:0006433">
    <property type="term" value="P:prolyl-tRNA aminoacylation"/>
    <property type="evidence" value="ECO:0000318"/>
    <property type="project" value="GO_Central"/>
</dbReference>
<dbReference type="CDD" id="cd00861">
    <property type="entry name" value="ProRS_anticodon_short"/>
    <property type="match status" value="1"/>
</dbReference>
<dbReference type="CDD" id="cd00779">
    <property type="entry name" value="ProRS_core_prok"/>
    <property type="match status" value="1"/>
</dbReference>
<dbReference type="FunFam" id="3.30.930.10:FF:000070">
    <property type="entry name" value="Proline--tRNA ligase"/>
    <property type="match status" value="1"/>
</dbReference>
<dbReference type="FunFam" id="3.30.930.10:FF:000120">
    <property type="entry name" value="Proline--tRNA ligase"/>
    <property type="match status" value="1"/>
</dbReference>
<dbReference type="FunFam" id="3.40.50.800:FF:000024">
    <property type="entry name" value="Proline--tRNA ligase"/>
    <property type="match status" value="1"/>
</dbReference>
<dbReference type="FunFam" id="3.90.960.10:FF:000008">
    <property type="entry name" value="Proline--tRNA ligase"/>
    <property type="match status" value="1"/>
</dbReference>
<dbReference type="Gene3D" id="3.40.50.800">
    <property type="entry name" value="Anticodon-binding domain"/>
    <property type="match status" value="1"/>
</dbReference>
<dbReference type="Gene3D" id="3.30.930.10">
    <property type="entry name" value="Bira Bifunctional Protein, Domain 2"/>
    <property type="match status" value="2"/>
</dbReference>
<dbReference type="Gene3D" id="3.90.960.10">
    <property type="entry name" value="YbaK/aminoacyl-tRNA synthetase-associated domain"/>
    <property type="match status" value="1"/>
</dbReference>
<dbReference type="HAMAP" id="MF_01569">
    <property type="entry name" value="Pro_tRNA_synth_type1"/>
    <property type="match status" value="1"/>
</dbReference>
<dbReference type="InterPro" id="IPR002314">
    <property type="entry name" value="aa-tRNA-synt_IIb"/>
</dbReference>
<dbReference type="InterPro" id="IPR006195">
    <property type="entry name" value="aa-tRNA-synth_II"/>
</dbReference>
<dbReference type="InterPro" id="IPR045864">
    <property type="entry name" value="aa-tRNA-synth_II/BPL/LPL"/>
</dbReference>
<dbReference type="InterPro" id="IPR004154">
    <property type="entry name" value="Anticodon-bd"/>
</dbReference>
<dbReference type="InterPro" id="IPR036621">
    <property type="entry name" value="Anticodon-bd_dom_sf"/>
</dbReference>
<dbReference type="InterPro" id="IPR002316">
    <property type="entry name" value="Pro-tRNA-ligase_IIa"/>
</dbReference>
<dbReference type="InterPro" id="IPR004500">
    <property type="entry name" value="Pro-tRNA-synth_IIa_bac-type"/>
</dbReference>
<dbReference type="InterPro" id="IPR023717">
    <property type="entry name" value="Pro-tRNA-Synthase_IIa_type1"/>
</dbReference>
<dbReference type="InterPro" id="IPR050062">
    <property type="entry name" value="Pro-tRNA_synthetase"/>
</dbReference>
<dbReference type="InterPro" id="IPR044140">
    <property type="entry name" value="ProRS_anticodon_short"/>
</dbReference>
<dbReference type="InterPro" id="IPR033730">
    <property type="entry name" value="ProRS_core_prok"/>
</dbReference>
<dbReference type="InterPro" id="IPR036754">
    <property type="entry name" value="YbaK/aa-tRNA-synt-asso_dom_sf"/>
</dbReference>
<dbReference type="InterPro" id="IPR007214">
    <property type="entry name" value="YbaK/aa-tRNA-synth-assoc-dom"/>
</dbReference>
<dbReference type="NCBIfam" id="NF006625">
    <property type="entry name" value="PRK09194.1"/>
    <property type="match status" value="1"/>
</dbReference>
<dbReference type="NCBIfam" id="TIGR00409">
    <property type="entry name" value="proS_fam_II"/>
    <property type="match status" value="1"/>
</dbReference>
<dbReference type="PANTHER" id="PTHR42753">
    <property type="entry name" value="MITOCHONDRIAL RIBOSOME PROTEIN L39/PROLYL-TRNA LIGASE FAMILY MEMBER"/>
    <property type="match status" value="1"/>
</dbReference>
<dbReference type="PANTHER" id="PTHR42753:SF2">
    <property type="entry name" value="PROLINE--TRNA LIGASE"/>
    <property type="match status" value="1"/>
</dbReference>
<dbReference type="Pfam" id="PF03129">
    <property type="entry name" value="HGTP_anticodon"/>
    <property type="match status" value="1"/>
</dbReference>
<dbReference type="Pfam" id="PF00587">
    <property type="entry name" value="tRNA-synt_2b"/>
    <property type="match status" value="1"/>
</dbReference>
<dbReference type="Pfam" id="PF04073">
    <property type="entry name" value="tRNA_edit"/>
    <property type="match status" value="1"/>
</dbReference>
<dbReference type="PRINTS" id="PR01046">
    <property type="entry name" value="TRNASYNTHPRO"/>
</dbReference>
<dbReference type="SUPFAM" id="SSF52954">
    <property type="entry name" value="Class II aaRS ABD-related"/>
    <property type="match status" value="1"/>
</dbReference>
<dbReference type="SUPFAM" id="SSF55681">
    <property type="entry name" value="Class II aaRS and biotin synthetases"/>
    <property type="match status" value="1"/>
</dbReference>
<dbReference type="SUPFAM" id="SSF55826">
    <property type="entry name" value="YbaK/ProRS associated domain"/>
    <property type="match status" value="1"/>
</dbReference>
<dbReference type="PROSITE" id="PS50862">
    <property type="entry name" value="AA_TRNA_LIGASE_II"/>
    <property type="match status" value="1"/>
</dbReference>
<organism>
    <name type="scientific">Mycobacterium tuberculosis (strain ATCC 25618 / H37Rv)</name>
    <dbReference type="NCBI Taxonomy" id="83332"/>
    <lineage>
        <taxon>Bacteria</taxon>
        <taxon>Bacillati</taxon>
        <taxon>Actinomycetota</taxon>
        <taxon>Actinomycetes</taxon>
        <taxon>Mycobacteriales</taxon>
        <taxon>Mycobacteriaceae</taxon>
        <taxon>Mycobacterium</taxon>
        <taxon>Mycobacterium tuberculosis complex</taxon>
    </lineage>
</organism>
<keyword id="KW-0030">Aminoacyl-tRNA synthetase</keyword>
<keyword id="KW-0067">ATP-binding</keyword>
<keyword id="KW-0963">Cytoplasm</keyword>
<keyword id="KW-1017">Isopeptide bond</keyword>
<keyword id="KW-0436">Ligase</keyword>
<keyword id="KW-0547">Nucleotide-binding</keyword>
<keyword id="KW-0648">Protein biosynthesis</keyword>
<keyword id="KW-1185">Reference proteome</keyword>
<keyword id="KW-0832">Ubl conjugation</keyword>